<protein>
    <recommendedName>
        <fullName>RCC1 domain-containing protein 1</fullName>
    </recommendedName>
</protein>
<dbReference type="EMBL" id="AC068831">
    <property type="status" value="NOT_ANNOTATED_CDS"/>
    <property type="molecule type" value="Genomic_DNA"/>
</dbReference>
<dbReference type="EMBL" id="CH471101">
    <property type="protein sequence ID" value="EAX02130.1"/>
    <property type="molecule type" value="Genomic_DNA"/>
</dbReference>
<dbReference type="EMBL" id="BC113826">
    <property type="protein sequence ID" value="AAI13827.1"/>
    <property type="molecule type" value="mRNA"/>
</dbReference>
<dbReference type="EMBL" id="BC140708">
    <property type="protein sequence ID" value="AAI40709.1"/>
    <property type="molecule type" value="mRNA"/>
</dbReference>
<dbReference type="EMBL" id="BC140709">
    <property type="protein sequence ID" value="AAI40710.1"/>
    <property type="molecule type" value="mRNA"/>
</dbReference>
<dbReference type="CCDS" id="CCDS32333.1"/>
<dbReference type="RefSeq" id="NP_001017919.1">
    <property type="nucleotide sequence ID" value="NM_001017919.2"/>
</dbReference>
<dbReference type="RefSeq" id="NP_291022.2">
    <property type="nucleotide sequence ID" value="NM_033544.2"/>
</dbReference>
<dbReference type="RefSeq" id="XP_047289272.1">
    <property type="nucleotide sequence ID" value="XM_047433316.1"/>
</dbReference>
<dbReference type="RefSeq" id="XP_047289273.1">
    <property type="nucleotide sequence ID" value="XM_047433317.1"/>
</dbReference>
<dbReference type="RefSeq" id="XP_054235146.1">
    <property type="nucleotide sequence ID" value="XM_054379171.1"/>
</dbReference>
<dbReference type="RefSeq" id="XP_054235147.1">
    <property type="nucleotide sequence ID" value="XM_054379172.1"/>
</dbReference>
<dbReference type="PDB" id="6F4R">
    <property type="method" value="X-ray"/>
    <property type="resolution" value="1.30 A"/>
    <property type="chains" value="B=139-143"/>
</dbReference>
<dbReference type="PDB" id="6F4S">
    <property type="method" value="X-ray"/>
    <property type="resolution" value="1.46 A"/>
    <property type="chains" value="B=139-143"/>
</dbReference>
<dbReference type="PDB" id="6F4T">
    <property type="method" value="X-ray"/>
    <property type="resolution" value="1.22 A"/>
    <property type="chains" value="B=139-143"/>
</dbReference>
<dbReference type="PDBsum" id="6F4R"/>
<dbReference type="PDBsum" id="6F4S"/>
<dbReference type="PDBsum" id="6F4T"/>
<dbReference type="SMR" id="A6NED2"/>
<dbReference type="BioGRID" id="124832">
    <property type="interactions" value="91"/>
</dbReference>
<dbReference type="CORUM" id="A6NED2"/>
<dbReference type="FunCoup" id="A6NED2">
    <property type="interactions" value="328"/>
</dbReference>
<dbReference type="IntAct" id="A6NED2">
    <property type="interactions" value="56"/>
</dbReference>
<dbReference type="MINT" id="A6NED2"/>
<dbReference type="STRING" id="9606.ENSP00000377801"/>
<dbReference type="GlyGen" id="A6NED2">
    <property type="glycosylation" value="3 sites, 1 O-linked glycan (1 site)"/>
</dbReference>
<dbReference type="iPTMnet" id="A6NED2"/>
<dbReference type="PhosphoSitePlus" id="A6NED2"/>
<dbReference type="BioMuta" id="RCCD1"/>
<dbReference type="jPOST" id="A6NED2"/>
<dbReference type="MassIVE" id="A6NED2"/>
<dbReference type="PaxDb" id="9606-ENSP00000377801"/>
<dbReference type="PeptideAtlas" id="A6NED2"/>
<dbReference type="ProteomicsDB" id="977"/>
<dbReference type="Pumba" id="A6NED2"/>
<dbReference type="Antibodypedia" id="50047">
    <property type="antibodies" value="19 antibodies from 10 providers"/>
</dbReference>
<dbReference type="DNASU" id="91433"/>
<dbReference type="Ensembl" id="ENST00000394258.7">
    <property type="protein sequence ID" value="ENSP00000377801.2"/>
    <property type="gene ID" value="ENSG00000166965.13"/>
</dbReference>
<dbReference type="Ensembl" id="ENST00000556618.1">
    <property type="protein sequence ID" value="ENSP00000451963.1"/>
    <property type="gene ID" value="ENSG00000166965.13"/>
</dbReference>
<dbReference type="GeneID" id="91433"/>
<dbReference type="KEGG" id="hsa:91433"/>
<dbReference type="MANE-Select" id="ENST00000394258.7">
    <property type="protein sequence ID" value="ENSP00000377801.2"/>
    <property type="RefSeq nucleotide sequence ID" value="NM_001017919.2"/>
    <property type="RefSeq protein sequence ID" value="NP_001017919.1"/>
</dbReference>
<dbReference type="UCSC" id="uc002bqk.4">
    <property type="organism name" value="human"/>
</dbReference>
<dbReference type="AGR" id="HGNC:30457"/>
<dbReference type="CTD" id="91433"/>
<dbReference type="DisGeNET" id="91433"/>
<dbReference type="GeneCards" id="RCCD1"/>
<dbReference type="HGNC" id="HGNC:30457">
    <property type="gene designation" value="RCCD1"/>
</dbReference>
<dbReference type="HPA" id="ENSG00000166965">
    <property type="expression patterns" value="Low tissue specificity"/>
</dbReference>
<dbReference type="MIM" id="617997">
    <property type="type" value="gene"/>
</dbReference>
<dbReference type="neXtProt" id="NX_A6NED2"/>
<dbReference type="OpenTargets" id="ENSG00000166965"/>
<dbReference type="PharmGKB" id="PA142671092"/>
<dbReference type="VEuPathDB" id="HostDB:ENSG00000166965"/>
<dbReference type="eggNOG" id="KOG1426">
    <property type="taxonomic scope" value="Eukaryota"/>
</dbReference>
<dbReference type="GeneTree" id="ENSGT00940000162149"/>
<dbReference type="InParanoid" id="A6NED2"/>
<dbReference type="OMA" id="PSWSMEI"/>
<dbReference type="OrthoDB" id="5370059at2759"/>
<dbReference type="PAN-GO" id="A6NED2">
    <property type="GO annotations" value="0 GO annotations based on evolutionary models"/>
</dbReference>
<dbReference type="PhylomeDB" id="A6NED2"/>
<dbReference type="TreeFam" id="TF329484"/>
<dbReference type="PathwayCommons" id="A6NED2"/>
<dbReference type="Reactome" id="R-HSA-9629569">
    <property type="pathway name" value="Protein hydroxylation"/>
</dbReference>
<dbReference type="SignaLink" id="A6NED2"/>
<dbReference type="BioGRID-ORCS" id="91433">
    <property type="hits" value="20 hits in 1157 CRISPR screens"/>
</dbReference>
<dbReference type="ChiTaRS" id="RCCD1">
    <property type="organism name" value="human"/>
</dbReference>
<dbReference type="GenomeRNAi" id="91433"/>
<dbReference type="Pharos" id="A6NED2">
    <property type="development level" value="Tbio"/>
</dbReference>
<dbReference type="PRO" id="PR:A6NED2"/>
<dbReference type="Proteomes" id="UP000005640">
    <property type="component" value="Chromosome 15"/>
</dbReference>
<dbReference type="RNAct" id="A6NED2">
    <property type="molecule type" value="protein"/>
</dbReference>
<dbReference type="Bgee" id="ENSG00000166965">
    <property type="expression patterns" value="Expressed in secondary oocyte and 154 other cell types or tissues"/>
</dbReference>
<dbReference type="ExpressionAtlas" id="A6NED2">
    <property type="expression patterns" value="baseline and differential"/>
</dbReference>
<dbReference type="GO" id="GO:0005694">
    <property type="term" value="C:chromosome"/>
    <property type="evidence" value="ECO:0007669"/>
    <property type="project" value="UniProtKB-SubCell"/>
</dbReference>
<dbReference type="GO" id="GO:0005829">
    <property type="term" value="C:cytosol"/>
    <property type="evidence" value="ECO:0000314"/>
    <property type="project" value="HPA"/>
</dbReference>
<dbReference type="GO" id="GO:0005886">
    <property type="term" value="C:plasma membrane"/>
    <property type="evidence" value="ECO:0000314"/>
    <property type="project" value="HPA"/>
</dbReference>
<dbReference type="GO" id="GO:0006325">
    <property type="term" value="P:chromatin organization"/>
    <property type="evidence" value="ECO:0007669"/>
    <property type="project" value="UniProtKB-KW"/>
</dbReference>
<dbReference type="FunFam" id="2.130.10.30:FF:000052">
    <property type="entry name" value="RCC1 domain containing 1"/>
    <property type="match status" value="1"/>
</dbReference>
<dbReference type="FunFam" id="2.130.10.30:FF:000056">
    <property type="entry name" value="RCC1 domain containing 1"/>
    <property type="match status" value="1"/>
</dbReference>
<dbReference type="Gene3D" id="2.130.10.30">
    <property type="entry name" value="Regulator of chromosome condensation 1/beta-lactamase-inhibitor protein II"/>
    <property type="match status" value="2"/>
</dbReference>
<dbReference type="InterPro" id="IPR009091">
    <property type="entry name" value="RCC1/BLIP-II"/>
</dbReference>
<dbReference type="InterPro" id="IPR052830">
    <property type="entry name" value="RCC1_domain-containing"/>
</dbReference>
<dbReference type="InterPro" id="IPR000408">
    <property type="entry name" value="Reg_chr_condens"/>
</dbReference>
<dbReference type="PANTHER" id="PTHR46849">
    <property type="entry name" value="RCC1 DOMAIN-CONTAINING PROTEIN 1"/>
    <property type="match status" value="1"/>
</dbReference>
<dbReference type="PANTHER" id="PTHR46849:SF1">
    <property type="entry name" value="RCC1 DOMAIN-CONTAINING PROTEIN 1"/>
    <property type="match status" value="1"/>
</dbReference>
<dbReference type="Pfam" id="PF00415">
    <property type="entry name" value="RCC1"/>
    <property type="match status" value="2"/>
</dbReference>
<dbReference type="PRINTS" id="PR00633">
    <property type="entry name" value="RCCNDNSATION"/>
</dbReference>
<dbReference type="SUPFAM" id="SSF50985">
    <property type="entry name" value="RCC1/BLIP-II"/>
    <property type="match status" value="1"/>
</dbReference>
<dbReference type="PROSITE" id="PS00626">
    <property type="entry name" value="RCC1_2"/>
    <property type="match status" value="2"/>
</dbReference>
<dbReference type="PROSITE" id="PS50012">
    <property type="entry name" value="RCC1_3"/>
    <property type="match status" value="3"/>
</dbReference>
<proteinExistence type="evidence at protein level"/>
<accession>A6NED2</accession>
<accession>B2RTP9</accession>
<accession>Q29RX6</accession>
<comment type="function">
    <text evidence="1 2">Plays a role in transcriptional repression of satellite repeats, possibly by regulating H3K36 methylation levels in centromeric regions together with KDM8 (PubMed:24981860). Possibly together with KDM8, is involved in proper mitotic spindle organization and chromosome segregation (PubMed:24981860). Plays a role in regulating alpha-tubulin deacetylation and cytoskeletal microtubule stability, thereby promoting cell migration and TGF-beta-induced epithelial to mesenchymal transition (EMT), potentially through the inhibition of KDM8 (PubMed:28455245).</text>
</comment>
<comment type="subunit">
    <text evidence="1 2">Found in a complex with KDM8 (PubMed:24981860). Interacts (via N-terminus) with KDM8 (via N-terminus) (PubMed:24981860, PubMed:28455245).</text>
</comment>
<comment type="interaction">
    <interactant intactId="EBI-21552314">
        <id>A6NED2</id>
    </interactant>
    <interactant intactId="EBI-750326">
        <id>Q8N371</id>
        <label>KDM8</label>
    </interactant>
    <organismsDiffer>false</organismsDiffer>
    <experiments>4</experiments>
</comment>
<comment type="subcellular location">
    <subcellularLocation>
        <location evidence="1">Chromosome</location>
    </subcellularLocation>
    <text evidence="1">Colocalizes with trimethylated 'Lys-9' of histone H3 (H3K9me3).</text>
</comment>
<comment type="PTM">
    <text evidence="4">Specifically hydroxylated (with R stereochemistry) at C-3 of ARG-141 by KDM8.</text>
</comment>
<comment type="caution">
    <text evidence="1 3">Postulated to regulate KDM8 histone demethylase activity on di- and trimethylated 'Lys-36' (H3K36me2/me3) of histone H3 (PubMed:24981860). However the demethylase activity of JMJD5 is controversial, as it was later shown to rather act as an endopeptidase that cleaves monomethylated and dimethylated arginine residues of histones H2, H3 and H4. In several studies, JMJD5 was shown not to display any demethylase activity toward methylated H3K36 nor toward other methyllysines in the N-terminal tails of H3 and H4 in vitro (PubMed:28982940).</text>
</comment>
<evidence type="ECO:0000269" key="1">
    <source>
    </source>
</evidence>
<evidence type="ECO:0000269" key="2">
    <source>
    </source>
</evidence>
<evidence type="ECO:0000269" key="3">
    <source>
    </source>
</evidence>
<evidence type="ECO:0000269" key="4">
    <source>
    </source>
</evidence>
<evidence type="ECO:0000303" key="5">
    <source>
    </source>
</evidence>
<evidence type="ECO:0000305" key="6"/>
<evidence type="ECO:0000312" key="7">
    <source>
        <dbReference type="HGNC" id="HGNC:30457"/>
    </source>
</evidence>
<sequence>MAEERPGAWFGFGFCGFGQELGSGRGRQVHSPSPLRAGVDICRVSASWSYTAFVTRGGRLELSGSASGAAGRCKDAWASEGLLAVLRAGPGPEALLQVWAAESALRGEPLWAQNVVPEAEGEDDPAGEAQAGRLPLLPCARAYVSPRAPFYRPLAPELRARQLELGAEHALLLDAAGQVFSWGGGRHGQLGHGTLEAELEPRLLEALQGLVMAEVAAGGWHSVCVSETGDIYIWGWNESGQLALPTRNLAEDGETVAREATELNEDGSQVKRTGGAEDGAPAPFIAVQPFPALLDLPMGSDAVKASCGSRHTAVVTRTGELYTWGWGKYGQLGHEDTTSLDRPRRVEYFVDKQLQVKAVTCGPWNTYVYAVEKGKS</sequence>
<gene>
    <name evidence="5 7" type="primary">RCCD1</name>
</gene>
<name>RCCD1_HUMAN</name>
<keyword id="KW-0002">3D-structure</keyword>
<keyword id="KW-0156">Chromatin regulator</keyword>
<keyword id="KW-0158">Chromosome</keyword>
<keyword id="KW-0379">Hydroxylation</keyword>
<keyword id="KW-1267">Proteomics identification</keyword>
<keyword id="KW-1185">Reference proteome</keyword>
<keyword id="KW-0677">Repeat</keyword>
<reference key="1">
    <citation type="journal article" date="2006" name="Nature">
        <title>Analysis of the DNA sequence and duplication history of human chromosome 15.</title>
        <authorList>
            <person name="Zody M.C."/>
            <person name="Garber M."/>
            <person name="Sharpe T."/>
            <person name="Young S.K."/>
            <person name="Rowen L."/>
            <person name="O'Neill K."/>
            <person name="Whittaker C.A."/>
            <person name="Kamal M."/>
            <person name="Chang J.L."/>
            <person name="Cuomo C.A."/>
            <person name="Dewar K."/>
            <person name="FitzGerald M.G."/>
            <person name="Kodira C.D."/>
            <person name="Madan A."/>
            <person name="Qin S."/>
            <person name="Yang X."/>
            <person name="Abbasi N."/>
            <person name="Abouelleil A."/>
            <person name="Arachchi H.M."/>
            <person name="Baradarani L."/>
            <person name="Birditt B."/>
            <person name="Bloom S."/>
            <person name="Bloom T."/>
            <person name="Borowsky M.L."/>
            <person name="Burke J."/>
            <person name="Butler J."/>
            <person name="Cook A."/>
            <person name="DeArellano K."/>
            <person name="DeCaprio D."/>
            <person name="Dorris L. III"/>
            <person name="Dors M."/>
            <person name="Eichler E.E."/>
            <person name="Engels R."/>
            <person name="Fahey J."/>
            <person name="Fleetwood P."/>
            <person name="Friedman C."/>
            <person name="Gearin G."/>
            <person name="Hall J.L."/>
            <person name="Hensley G."/>
            <person name="Johnson E."/>
            <person name="Jones C."/>
            <person name="Kamat A."/>
            <person name="Kaur A."/>
            <person name="Locke D.P."/>
            <person name="Madan A."/>
            <person name="Munson G."/>
            <person name="Jaffe D.B."/>
            <person name="Lui A."/>
            <person name="Macdonald P."/>
            <person name="Mauceli E."/>
            <person name="Naylor J.W."/>
            <person name="Nesbitt R."/>
            <person name="Nicol R."/>
            <person name="O'Leary S.B."/>
            <person name="Ratcliffe A."/>
            <person name="Rounsley S."/>
            <person name="She X."/>
            <person name="Sneddon K.M.B."/>
            <person name="Stewart S."/>
            <person name="Sougnez C."/>
            <person name="Stone S.M."/>
            <person name="Topham K."/>
            <person name="Vincent D."/>
            <person name="Wang S."/>
            <person name="Zimmer A.R."/>
            <person name="Birren B.W."/>
            <person name="Hood L."/>
            <person name="Lander E.S."/>
            <person name="Nusbaum C."/>
        </authorList>
    </citation>
    <scope>NUCLEOTIDE SEQUENCE [LARGE SCALE GENOMIC DNA]</scope>
</reference>
<reference key="2">
    <citation type="submission" date="2005-07" db="EMBL/GenBank/DDBJ databases">
        <authorList>
            <person name="Mural R.J."/>
            <person name="Istrail S."/>
            <person name="Sutton G.G."/>
            <person name="Florea L."/>
            <person name="Halpern A.L."/>
            <person name="Mobarry C.M."/>
            <person name="Lippert R."/>
            <person name="Walenz B."/>
            <person name="Shatkay H."/>
            <person name="Dew I."/>
            <person name="Miller J.R."/>
            <person name="Flanigan M.J."/>
            <person name="Edwards N.J."/>
            <person name="Bolanos R."/>
            <person name="Fasulo D."/>
            <person name="Halldorsson B.V."/>
            <person name="Hannenhalli S."/>
            <person name="Turner R."/>
            <person name="Yooseph S."/>
            <person name="Lu F."/>
            <person name="Nusskern D.R."/>
            <person name="Shue B.C."/>
            <person name="Zheng X.H."/>
            <person name="Zhong F."/>
            <person name="Delcher A.L."/>
            <person name="Huson D.H."/>
            <person name="Kravitz S.A."/>
            <person name="Mouchard L."/>
            <person name="Reinert K."/>
            <person name="Remington K.A."/>
            <person name="Clark A.G."/>
            <person name="Waterman M.S."/>
            <person name="Eichler E.E."/>
            <person name="Adams M.D."/>
            <person name="Hunkapiller M.W."/>
            <person name="Myers E.W."/>
            <person name="Venter J.C."/>
        </authorList>
    </citation>
    <scope>NUCLEOTIDE SEQUENCE [LARGE SCALE GENOMIC DNA]</scope>
</reference>
<reference key="3">
    <citation type="journal article" date="2004" name="Genome Res.">
        <title>The status, quality, and expansion of the NIH full-length cDNA project: the Mammalian Gene Collection (MGC).</title>
        <authorList>
            <consortium name="The MGC Project Team"/>
        </authorList>
    </citation>
    <scope>NUCLEOTIDE SEQUENCE [LARGE SCALE MRNA]</scope>
    <source>
        <tissue>Brain</tissue>
    </source>
</reference>
<reference key="4">
    <citation type="journal article" date="2011" name="BMC Syst. Biol.">
        <title>Initial characterization of the human central proteome.</title>
        <authorList>
            <person name="Burkard T.R."/>
            <person name="Planyavsky M."/>
            <person name="Kaupe I."/>
            <person name="Breitwieser F.P."/>
            <person name="Buerckstuemmer T."/>
            <person name="Bennett K.L."/>
            <person name="Superti-Furga G."/>
            <person name="Colinge J."/>
        </authorList>
    </citation>
    <scope>IDENTIFICATION BY MASS SPECTROMETRY [LARGE SCALE ANALYSIS]</scope>
</reference>
<reference key="5">
    <citation type="journal article" date="2014" name="Cell Rep.">
        <title>Human-chromatin-related protein interactions identify a demethylase complex required for chromosome segregation.</title>
        <authorList>
            <person name="Marcon E."/>
            <person name="Ni Z."/>
            <person name="Pu S."/>
            <person name="Turinsky A.L."/>
            <person name="Trimble S.S."/>
            <person name="Olsen J.B."/>
            <person name="Silverman-Gavrila R."/>
            <person name="Silverman-Gavrila L."/>
            <person name="Phanse S."/>
            <person name="Guo H."/>
            <person name="Zhong G."/>
            <person name="Guo X."/>
            <person name="Young P."/>
            <person name="Bailey S."/>
            <person name="Roudeva D."/>
            <person name="Zhao D."/>
            <person name="Hewel J."/>
            <person name="Li J."/>
            <person name="Graeslund S."/>
            <person name="Paduch M."/>
            <person name="Kossiakoff A.A."/>
            <person name="Lupien M."/>
            <person name="Emili A."/>
            <person name="Wodak S.J."/>
            <person name="Greenblatt J."/>
        </authorList>
    </citation>
    <scope>FUNCTION</scope>
    <scope>IDENTIFICATION IN A COMPLEX WITH KDM8</scope>
    <scope>INTERACTION WITH KDM8</scope>
    <scope>SUBCELLULAR LOCATION</scope>
    <scope>IDENTIFICATION BY MASS SPECTROMETRY</scope>
    <scope>CAUTION</scope>
</reference>
<reference key="6">
    <citation type="journal article" date="2017" name="Cancer Lett.">
        <title>RCCD1 depletion attenuates TGF-beta-induced EMT and cell migration by stabilizing cytoskeletal microtubules in NSCLC cells.</title>
        <authorList>
            <person name="Wu J."/>
            <person name="He Z."/>
            <person name="Yang X.M."/>
            <person name="Li K.L."/>
            <person name="Wang D.L."/>
            <person name="Sun F.L."/>
        </authorList>
    </citation>
    <scope>FUNCTION</scope>
    <scope>INTERACTION WITH KDM8</scope>
</reference>
<reference key="7">
    <citation type="journal article" date="2017" name="EMBO Rep.">
        <title>JMJD5 cleaves monomethylated histone H3 N-tail under DNA damaging stress.</title>
        <authorList>
            <person name="Shen J."/>
            <person name="Xiang X."/>
            <person name="Chen L."/>
            <person name="Wang H."/>
            <person name="Wu L."/>
            <person name="Sun Y."/>
            <person name="Ma L."/>
            <person name="Gu X."/>
            <person name="Liu H."/>
            <person name="Wang L."/>
            <person name="Yu Y.N."/>
            <person name="Shao J."/>
            <person name="Huang C."/>
            <person name="Chin Y.E."/>
        </authorList>
    </citation>
    <scope>CAUTION</scope>
</reference>
<reference key="8">
    <citation type="journal article" date="2018" name="Nat. Commun.">
        <title>JMJD5 is a human L-arginyl C-3 hydroxylase.</title>
        <authorList>
            <person name="Wilkins S.E."/>
            <person name="Islam S."/>
            <person name="Gannon J.M."/>
            <person name="Markolovic S."/>
            <person name="Hopkinson R.J."/>
            <person name="Ge W."/>
            <person name="Schofield C.J."/>
            <person name="Chowdhury R."/>
        </authorList>
    </citation>
    <scope>HYDROXYLATION AT ARG-141</scope>
    <scope>MUTAGENESIS OF ARG-141</scope>
</reference>
<feature type="chain" id="PRO_0000337973" description="RCC1 domain-containing protein 1">
    <location>
        <begin position="1"/>
        <end position="376"/>
    </location>
</feature>
<feature type="repeat" description="RCC1 1">
    <location>
        <begin position="6"/>
        <end position="56"/>
    </location>
</feature>
<feature type="repeat" description="RCC1 2">
    <location>
        <begin position="176"/>
        <end position="227"/>
    </location>
</feature>
<feature type="repeat" description="RCC1 3">
    <location>
        <begin position="229"/>
        <end position="317"/>
    </location>
</feature>
<feature type="repeat" description="RCC1 4">
    <location>
        <begin position="318"/>
        <end position="371"/>
    </location>
</feature>
<feature type="region of interest" description="Interaction with KDM8" evidence="1">
    <location>
        <begin position="1"/>
        <end position="169"/>
    </location>
</feature>
<feature type="modified residue" description="(3R)-3-hydroxyarginine" evidence="4">
    <location>
        <position position="141"/>
    </location>
</feature>
<feature type="sequence variant" id="VAR_043727" description="In dbSNP:rs4932380.">
    <original>A</original>
    <variation>S</variation>
    <location>
        <position position="8"/>
    </location>
</feature>
<feature type="mutagenesis site" description="Abolishes hydroxylation by KDM8." evidence="4">
    <original>R</original>
    <variation>A</variation>
    <location>
        <position position="141"/>
    </location>
</feature>
<feature type="sequence conflict" description="In Ref. 3; AAI13827." evidence="6" ref="3">
    <original>RLPLLPCARAYVSPRAPFYRPLAPELRARQLELGAEHALLLDAAGQVFSWGGGR</original>
    <variation>GGAAGGLVRLRFLRLRAGAGLRTRAPGAQPQSAAGGRRHLPRERELELHRFRDP</variation>
    <location>
        <begin position="133"/>
        <end position="186"/>
    </location>
</feature>
<organism>
    <name type="scientific">Homo sapiens</name>
    <name type="common">Human</name>
    <dbReference type="NCBI Taxonomy" id="9606"/>
    <lineage>
        <taxon>Eukaryota</taxon>
        <taxon>Metazoa</taxon>
        <taxon>Chordata</taxon>
        <taxon>Craniata</taxon>
        <taxon>Vertebrata</taxon>
        <taxon>Euteleostomi</taxon>
        <taxon>Mammalia</taxon>
        <taxon>Eutheria</taxon>
        <taxon>Euarchontoglires</taxon>
        <taxon>Primates</taxon>
        <taxon>Haplorrhini</taxon>
        <taxon>Catarrhini</taxon>
        <taxon>Hominidae</taxon>
        <taxon>Homo</taxon>
    </lineage>
</organism>